<name>MURI_SALTY</name>
<reference key="1">
    <citation type="journal article" date="2001" name="Nature">
        <title>Complete genome sequence of Salmonella enterica serovar Typhimurium LT2.</title>
        <authorList>
            <person name="McClelland M."/>
            <person name="Sanderson K.E."/>
            <person name="Spieth J."/>
            <person name="Clifton S.W."/>
            <person name="Latreille P."/>
            <person name="Courtney L."/>
            <person name="Porwollik S."/>
            <person name="Ali J."/>
            <person name="Dante M."/>
            <person name="Du F."/>
            <person name="Hou S."/>
            <person name="Layman D."/>
            <person name="Leonard S."/>
            <person name="Nguyen C."/>
            <person name="Scott K."/>
            <person name="Holmes A."/>
            <person name="Grewal N."/>
            <person name="Mulvaney E."/>
            <person name="Ryan E."/>
            <person name="Sun H."/>
            <person name="Florea L."/>
            <person name="Miller W."/>
            <person name="Stoneking T."/>
            <person name="Nhan M."/>
            <person name="Waterston R."/>
            <person name="Wilson R.K."/>
        </authorList>
    </citation>
    <scope>NUCLEOTIDE SEQUENCE [LARGE SCALE GENOMIC DNA]</scope>
    <source>
        <strain>LT2 / SGSC1412 / ATCC 700720</strain>
    </source>
</reference>
<reference key="2">
    <citation type="journal article" date="1992" name="Res. Microbiol.">
        <title>Conserved structural and regulatory regions in the Salmonella typhimurium btuB gene for the outer membrane vitamin B12 transport protein.</title>
        <authorList>
            <person name="Wei B.Y."/>
            <person name="Bradbeer C."/>
            <person name="Kadner R.J."/>
        </authorList>
    </citation>
    <scope>NUCLEOTIDE SEQUENCE [GENOMIC DNA] OF 1-46</scope>
</reference>
<reference key="3">
    <citation type="journal article" date="1994" name="Nat. Genet.">
        <title>Large scale bacterial gene discovery by similarity search.</title>
        <authorList>
            <person name="Robison K."/>
            <person name="Gilbert W."/>
            <person name="Church G.M."/>
        </authorList>
    </citation>
    <scope>IDENTIFICATION</scope>
</reference>
<protein>
    <recommendedName>
        <fullName evidence="1">Glutamate racemase</fullName>
        <ecNumber evidence="1">5.1.1.3</ecNumber>
    </recommendedName>
</protein>
<sequence>MATKLQDENTPCLAATPSEPRPTVLVFDSGVGGLSVYDEIRRLLPDLHYIYAFDNVAFPYGEKSETFIVERVVEIVTAVQQRYPLSLAVIACNTASTVSLPALREKFAFPVVGVVPAIKPAARLTANGVVGLLATRATVKRPYTHELIARFANECQIAMLGSAELVELAEAKLHGDSVSLEELRRILRPWLRMPEPPDTVVLGCTHFPLLRDELLQVLPEGTRLVDSGAAIARRTAWLLEHEAPDAKSTDANIAYCMAMTPGAEQLLPVLQRYGFETLEKLPV</sequence>
<gene>
    <name evidence="1" type="primary">murI</name>
    <name type="ordered locus">STM4131</name>
</gene>
<proteinExistence type="inferred from homology"/>
<organism>
    <name type="scientific">Salmonella typhimurium (strain LT2 / SGSC1412 / ATCC 700720)</name>
    <dbReference type="NCBI Taxonomy" id="99287"/>
    <lineage>
        <taxon>Bacteria</taxon>
        <taxon>Pseudomonadati</taxon>
        <taxon>Pseudomonadota</taxon>
        <taxon>Gammaproteobacteria</taxon>
        <taxon>Enterobacterales</taxon>
        <taxon>Enterobacteriaceae</taxon>
        <taxon>Salmonella</taxon>
    </lineage>
</organism>
<dbReference type="EC" id="5.1.1.3" evidence="1"/>
<dbReference type="EMBL" id="AE006468">
    <property type="protein sequence ID" value="AAL22969.1"/>
    <property type="molecule type" value="Genomic_DNA"/>
</dbReference>
<dbReference type="EMBL" id="M89481">
    <property type="status" value="NOT_ANNOTATED_CDS"/>
    <property type="molecule type" value="Genomic_DNA"/>
</dbReference>
<dbReference type="RefSeq" id="NP_463010.1">
    <property type="nucleotide sequence ID" value="NC_003197.2"/>
</dbReference>
<dbReference type="RefSeq" id="WP_000201805.1">
    <property type="nucleotide sequence ID" value="NC_003197.2"/>
</dbReference>
<dbReference type="SMR" id="P40723"/>
<dbReference type="STRING" id="99287.STM4131"/>
<dbReference type="PaxDb" id="99287-STM4131"/>
<dbReference type="GeneID" id="1255657"/>
<dbReference type="KEGG" id="stm:STM4131"/>
<dbReference type="PATRIC" id="fig|99287.12.peg.4352"/>
<dbReference type="HOGENOM" id="CLU_052344_2_0_6"/>
<dbReference type="OMA" id="LDFFKPH"/>
<dbReference type="PhylomeDB" id="P40723"/>
<dbReference type="BioCyc" id="SENT99287:STM4131-MONOMER"/>
<dbReference type="UniPathway" id="UPA00219"/>
<dbReference type="Proteomes" id="UP000001014">
    <property type="component" value="Chromosome"/>
</dbReference>
<dbReference type="GO" id="GO:0008881">
    <property type="term" value="F:glutamate racemase activity"/>
    <property type="evidence" value="ECO:0000318"/>
    <property type="project" value="GO_Central"/>
</dbReference>
<dbReference type="GO" id="GO:0071555">
    <property type="term" value="P:cell wall organization"/>
    <property type="evidence" value="ECO:0007669"/>
    <property type="project" value="UniProtKB-KW"/>
</dbReference>
<dbReference type="GO" id="GO:0009252">
    <property type="term" value="P:peptidoglycan biosynthetic process"/>
    <property type="evidence" value="ECO:0000318"/>
    <property type="project" value="GO_Central"/>
</dbReference>
<dbReference type="GO" id="GO:0008360">
    <property type="term" value="P:regulation of cell shape"/>
    <property type="evidence" value="ECO:0007669"/>
    <property type="project" value="UniProtKB-KW"/>
</dbReference>
<dbReference type="FunFam" id="3.40.50.1860:FF:000002">
    <property type="entry name" value="Glutamate racemase"/>
    <property type="match status" value="1"/>
</dbReference>
<dbReference type="Gene3D" id="3.40.50.1860">
    <property type="match status" value="2"/>
</dbReference>
<dbReference type="HAMAP" id="MF_00258">
    <property type="entry name" value="Glu_racemase"/>
    <property type="match status" value="1"/>
</dbReference>
<dbReference type="InterPro" id="IPR015942">
    <property type="entry name" value="Asp/Glu/hydantoin_racemase"/>
</dbReference>
<dbReference type="InterPro" id="IPR001920">
    <property type="entry name" value="Asp/Glu_race"/>
</dbReference>
<dbReference type="InterPro" id="IPR018187">
    <property type="entry name" value="Asp/Glu_racemase_AS_1"/>
</dbReference>
<dbReference type="InterPro" id="IPR033134">
    <property type="entry name" value="Asp/Glu_racemase_AS_2"/>
</dbReference>
<dbReference type="InterPro" id="IPR004391">
    <property type="entry name" value="Glu_race"/>
</dbReference>
<dbReference type="NCBIfam" id="TIGR00067">
    <property type="entry name" value="glut_race"/>
    <property type="match status" value="1"/>
</dbReference>
<dbReference type="NCBIfam" id="NF002034">
    <property type="entry name" value="PRK00865.1-1"/>
    <property type="match status" value="1"/>
</dbReference>
<dbReference type="PANTHER" id="PTHR21198">
    <property type="entry name" value="GLUTAMATE RACEMASE"/>
    <property type="match status" value="1"/>
</dbReference>
<dbReference type="PANTHER" id="PTHR21198:SF2">
    <property type="entry name" value="GLUTAMATE RACEMASE"/>
    <property type="match status" value="1"/>
</dbReference>
<dbReference type="Pfam" id="PF01177">
    <property type="entry name" value="Asp_Glu_race"/>
    <property type="match status" value="1"/>
</dbReference>
<dbReference type="SUPFAM" id="SSF53681">
    <property type="entry name" value="Aspartate/glutamate racemase"/>
    <property type="match status" value="2"/>
</dbReference>
<dbReference type="PROSITE" id="PS00923">
    <property type="entry name" value="ASP_GLU_RACEMASE_1"/>
    <property type="match status" value="1"/>
</dbReference>
<dbReference type="PROSITE" id="PS00924">
    <property type="entry name" value="ASP_GLU_RACEMASE_2"/>
    <property type="match status" value="1"/>
</dbReference>
<accession>P40723</accession>
<comment type="function">
    <text evidence="1">Provides the (R)-glutamate required for cell wall biosynthesis.</text>
</comment>
<comment type="catalytic activity">
    <reaction evidence="1">
        <text>L-glutamate = D-glutamate</text>
        <dbReference type="Rhea" id="RHEA:12813"/>
        <dbReference type="ChEBI" id="CHEBI:29985"/>
        <dbReference type="ChEBI" id="CHEBI:29986"/>
        <dbReference type="EC" id="5.1.1.3"/>
    </reaction>
</comment>
<comment type="pathway">
    <text evidence="1">Cell wall biogenesis; peptidoglycan biosynthesis.</text>
</comment>
<comment type="similarity">
    <text evidence="1">Belongs to the aspartate/glutamate racemases family.</text>
</comment>
<keyword id="KW-0133">Cell shape</keyword>
<keyword id="KW-0961">Cell wall biogenesis/degradation</keyword>
<keyword id="KW-0413">Isomerase</keyword>
<keyword id="KW-0573">Peptidoglycan synthesis</keyword>
<keyword id="KW-1185">Reference proteome</keyword>
<feature type="chain" id="PRO_0000095504" description="Glutamate racemase">
    <location>
        <begin position="1"/>
        <end position="283"/>
    </location>
</feature>
<feature type="active site" description="Proton donor/acceptor" evidence="1">
    <location>
        <position position="92"/>
    </location>
</feature>
<feature type="active site" description="Proton donor/acceptor" evidence="1">
    <location>
        <position position="204"/>
    </location>
</feature>
<feature type="binding site" evidence="1">
    <location>
        <begin position="28"/>
        <end position="29"/>
    </location>
    <ligand>
        <name>substrate</name>
    </ligand>
</feature>
<feature type="binding site" evidence="1">
    <location>
        <begin position="60"/>
        <end position="61"/>
    </location>
    <ligand>
        <name>substrate</name>
    </ligand>
</feature>
<feature type="binding site" evidence="1">
    <location>
        <begin position="93"/>
        <end position="94"/>
    </location>
    <ligand>
        <name>substrate</name>
    </ligand>
</feature>
<feature type="binding site" evidence="1">
    <location>
        <begin position="205"/>
        <end position="206"/>
    </location>
    <ligand>
        <name>substrate</name>
    </ligand>
</feature>
<feature type="sequence conflict" description="In Ref. 2; M89481." evidence="2" ref="2">
    <original>RRLLP</original>
    <variation>SAAPA</variation>
    <location>
        <begin position="41"/>
        <end position="45"/>
    </location>
</feature>
<evidence type="ECO:0000255" key="1">
    <source>
        <dbReference type="HAMAP-Rule" id="MF_00258"/>
    </source>
</evidence>
<evidence type="ECO:0000305" key="2"/>